<proteinExistence type="inferred from homology"/>
<keyword id="KW-0975">Bacterial flagellum</keyword>
<keyword id="KW-1003">Cell membrane</keyword>
<keyword id="KW-0472">Membrane</keyword>
<keyword id="KW-0812">Transmembrane</keyword>
<keyword id="KW-1133">Transmembrane helix</keyword>
<accession>P0A0S4</accession>
<accession>O25964</accession>
<name>FLIQ_HELPJ</name>
<feature type="chain" id="PRO_0000129101" description="Flagellar biosynthetic protein FliQ">
    <location>
        <begin position="1"/>
        <end position="88"/>
    </location>
</feature>
<feature type="transmembrane region" description="Helical" evidence="2">
    <location>
        <begin position="17"/>
        <end position="37"/>
    </location>
</feature>
<feature type="transmembrane region" description="Helical" evidence="2">
    <location>
        <begin position="48"/>
        <end position="68"/>
    </location>
</feature>
<reference key="1">
    <citation type="journal article" date="1999" name="Nature">
        <title>Genomic sequence comparison of two unrelated isolates of the human gastric pathogen Helicobacter pylori.</title>
        <authorList>
            <person name="Alm R.A."/>
            <person name="Ling L.-S.L."/>
            <person name="Moir D.T."/>
            <person name="King B.L."/>
            <person name="Brown E.D."/>
            <person name="Doig P.C."/>
            <person name="Smith D.R."/>
            <person name="Noonan B."/>
            <person name="Guild B.C."/>
            <person name="deJonge B.L."/>
            <person name="Carmel G."/>
            <person name="Tummino P.J."/>
            <person name="Caruso A."/>
            <person name="Uria-Nickelsen M."/>
            <person name="Mills D.M."/>
            <person name="Ives C."/>
            <person name="Gibson R."/>
            <person name="Merberg D."/>
            <person name="Mills S.D."/>
            <person name="Jiang Q."/>
            <person name="Taylor D.E."/>
            <person name="Vovis G.F."/>
            <person name="Trust T.J."/>
        </authorList>
    </citation>
    <scope>NUCLEOTIDE SEQUENCE [LARGE SCALE GENOMIC DNA]</scope>
    <source>
        <strain>J99 / ATCC 700824</strain>
    </source>
</reference>
<sequence length="88" mass="9762">MESQLMKLAIETYKITLMISLPVLLAGLVVGLLVSIFQATTQINEMTLSFVPKILAVIGVLILTMPWMTNMLLDYTKTLIKLIPKIIG</sequence>
<protein>
    <recommendedName>
        <fullName>Flagellar biosynthetic protein FliQ</fullName>
    </recommendedName>
</protein>
<organism>
    <name type="scientific">Helicobacter pylori (strain J99 / ATCC 700824)</name>
    <name type="common">Campylobacter pylori J99</name>
    <dbReference type="NCBI Taxonomy" id="85963"/>
    <lineage>
        <taxon>Bacteria</taxon>
        <taxon>Pseudomonadati</taxon>
        <taxon>Campylobacterota</taxon>
        <taxon>Epsilonproteobacteria</taxon>
        <taxon>Campylobacterales</taxon>
        <taxon>Helicobacteraceae</taxon>
        <taxon>Helicobacter</taxon>
    </lineage>
</organism>
<gene>
    <name type="primary">fliQ</name>
    <name type="ordered locus">jhp_1314</name>
</gene>
<evidence type="ECO:0000250" key="1"/>
<evidence type="ECO:0000255" key="2"/>
<evidence type="ECO:0000305" key="3"/>
<comment type="function">
    <text evidence="1">Role in flagellar biosynthesis.</text>
</comment>
<comment type="subcellular location">
    <subcellularLocation>
        <location evidence="3">Cell membrane</location>
        <topology evidence="3">Multi-pass membrane protein</topology>
    </subcellularLocation>
    <subcellularLocation>
        <location evidence="1">Bacterial flagellum basal body</location>
    </subcellularLocation>
</comment>
<comment type="similarity">
    <text evidence="3">Belongs to the FliQ/MopD/SpaQ family.</text>
</comment>
<dbReference type="EMBL" id="AE001439">
    <property type="protein sequence ID" value="AAD06887.1"/>
    <property type="molecule type" value="Genomic_DNA"/>
</dbReference>
<dbReference type="PIR" id="C64697">
    <property type="entry name" value="C64697"/>
</dbReference>
<dbReference type="RefSeq" id="WP_000445741.1">
    <property type="nucleotide sequence ID" value="NZ_CP011330.1"/>
</dbReference>
<dbReference type="SMR" id="P0A0S4"/>
<dbReference type="GeneID" id="93236380"/>
<dbReference type="KEGG" id="hpj:jhp_1314"/>
<dbReference type="PATRIC" id="fig|85963.30.peg.1248"/>
<dbReference type="eggNOG" id="COG1987">
    <property type="taxonomic scope" value="Bacteria"/>
</dbReference>
<dbReference type="Proteomes" id="UP000000804">
    <property type="component" value="Chromosome"/>
</dbReference>
<dbReference type="GO" id="GO:0009425">
    <property type="term" value="C:bacterial-type flagellum basal body"/>
    <property type="evidence" value="ECO:0007669"/>
    <property type="project" value="UniProtKB-SubCell"/>
</dbReference>
<dbReference type="GO" id="GO:0005886">
    <property type="term" value="C:plasma membrane"/>
    <property type="evidence" value="ECO:0007669"/>
    <property type="project" value="UniProtKB-SubCell"/>
</dbReference>
<dbReference type="GO" id="GO:0044780">
    <property type="term" value="P:bacterial-type flagellum assembly"/>
    <property type="evidence" value="ECO:0007669"/>
    <property type="project" value="InterPro"/>
</dbReference>
<dbReference type="GO" id="GO:0009306">
    <property type="term" value="P:protein secretion"/>
    <property type="evidence" value="ECO:0007669"/>
    <property type="project" value="InterPro"/>
</dbReference>
<dbReference type="InterPro" id="IPR002191">
    <property type="entry name" value="Bac_export_3"/>
</dbReference>
<dbReference type="InterPro" id="IPR006305">
    <property type="entry name" value="FliQ"/>
</dbReference>
<dbReference type="NCBIfam" id="TIGR01402">
    <property type="entry name" value="fliQ"/>
    <property type="match status" value="1"/>
</dbReference>
<dbReference type="PANTHER" id="PTHR34040">
    <property type="entry name" value="FLAGELLAR BIOSYNTHETIC PROTEIN FLIQ"/>
    <property type="match status" value="1"/>
</dbReference>
<dbReference type="PANTHER" id="PTHR34040:SF2">
    <property type="entry name" value="FLAGELLAR BIOSYNTHETIC PROTEIN FLIQ"/>
    <property type="match status" value="1"/>
</dbReference>
<dbReference type="Pfam" id="PF01313">
    <property type="entry name" value="Bac_export_3"/>
    <property type="match status" value="1"/>
</dbReference>
<dbReference type="PIRSF" id="PIRSF004669">
    <property type="entry name" value="FliQ"/>
    <property type="match status" value="1"/>
</dbReference>
<dbReference type="PRINTS" id="PR00952">
    <property type="entry name" value="TYPE3IMQPROT"/>
</dbReference>